<comment type="function">
    <text>Troponin is the central regulatory protein of striated muscle contraction. Tn consists of three components: Tn-I which is the inhibitor of actomyosin ATPase, Tn-T which contains the binding site for tropomyosin and Tn-C. The binding of calcium to Tn-C abolishes the inhibitory action of Tn on actin filaments.</text>
</comment>
<comment type="miscellaneous">
    <text>This protein binds one calcium ion per molecule.</text>
</comment>
<comment type="similarity">
    <text evidence="3">Belongs to the troponin C family.</text>
</comment>
<accession>P35622</accession>
<keyword id="KW-0007">Acetylation</keyword>
<keyword id="KW-0106">Calcium</keyword>
<keyword id="KW-0903">Direct protein sequencing</keyword>
<keyword id="KW-0479">Metal-binding</keyword>
<keyword id="KW-0514">Muscle protein</keyword>
<keyword id="KW-0677">Repeat</keyword>
<organism>
    <name type="scientific">Mizuhopecten yessoensis</name>
    <name type="common">Japanese scallop</name>
    <name type="synonym">Patinopecten yessoensis</name>
    <dbReference type="NCBI Taxonomy" id="6573"/>
    <lineage>
        <taxon>Eukaryota</taxon>
        <taxon>Metazoa</taxon>
        <taxon>Spiralia</taxon>
        <taxon>Lophotrochozoa</taxon>
        <taxon>Mollusca</taxon>
        <taxon>Bivalvia</taxon>
        <taxon>Autobranchia</taxon>
        <taxon>Pteriomorphia</taxon>
        <taxon>Pectinida</taxon>
        <taxon>Pectinoidea</taxon>
        <taxon>Pectinidae</taxon>
        <taxon>Mizuhopecten</taxon>
    </lineage>
</organism>
<reference key="1">
    <citation type="journal article" date="1994" name="J. Biol. Chem.">
        <title>Amino acid sequence of troponin C from scallop striated adductor muscle.</title>
        <authorList>
            <person name="Nishita K."/>
            <person name="Tanaka H."/>
            <person name="Ojima T."/>
        </authorList>
    </citation>
    <scope>PROTEIN SEQUENCE</scope>
    <scope>ACETYLATION AT THR-1</scope>
    <source>
        <tissue>Striated adductor muscle</tissue>
    </source>
</reference>
<evidence type="ECO:0000255" key="1">
    <source>
        <dbReference type="PROSITE-ProRule" id="PRU00448"/>
    </source>
</evidence>
<evidence type="ECO:0000269" key="2">
    <source>
    </source>
</evidence>
<evidence type="ECO:0000305" key="3"/>
<protein>
    <recommendedName>
        <fullName>Troponin C</fullName>
        <shortName>TN-C</shortName>
    </recommendedName>
</protein>
<name>TNNC_MIZYE</name>
<sequence length="152" mass="17411">TEEFRASEKQILDAKQAFCNVDKKKEGTVSCKDLGAIFKSLGLLVKDDKIKDWSDEMDEEATGRLNCDAWIQLFERKLKEDLDERELKEAFRVLDKEKKGVIKVDVLRWILSSLGDELTEEEIENMIAETDTDGSGTVDYEEFKCLMMSSDA</sequence>
<dbReference type="PIR" id="A53051">
    <property type="entry name" value="A53051"/>
</dbReference>
<dbReference type="SMR" id="P35622"/>
<dbReference type="iPTMnet" id="P35622"/>
<dbReference type="EnsemblMetazoa" id="XM_021501829.1">
    <property type="protein sequence ID" value="XP_021357504.1"/>
    <property type="gene ID" value="LOC110453022"/>
</dbReference>
<dbReference type="OrthoDB" id="26525at2759"/>
<dbReference type="GO" id="GO:0016460">
    <property type="term" value="C:myosin II complex"/>
    <property type="evidence" value="ECO:0007669"/>
    <property type="project" value="TreeGrafter"/>
</dbReference>
<dbReference type="GO" id="GO:0005509">
    <property type="term" value="F:calcium ion binding"/>
    <property type="evidence" value="ECO:0007669"/>
    <property type="project" value="InterPro"/>
</dbReference>
<dbReference type="CDD" id="cd00051">
    <property type="entry name" value="EFh"/>
    <property type="match status" value="1"/>
</dbReference>
<dbReference type="FunFam" id="1.10.238.10:FF:000001">
    <property type="entry name" value="Calmodulin 1"/>
    <property type="match status" value="1"/>
</dbReference>
<dbReference type="Gene3D" id="1.10.238.10">
    <property type="entry name" value="EF-hand"/>
    <property type="match status" value="3"/>
</dbReference>
<dbReference type="InterPro" id="IPR050230">
    <property type="entry name" value="CALM/Myosin/TropC-like"/>
</dbReference>
<dbReference type="InterPro" id="IPR011992">
    <property type="entry name" value="EF-hand-dom_pair"/>
</dbReference>
<dbReference type="InterPro" id="IPR018247">
    <property type="entry name" value="EF_Hand_1_Ca_BS"/>
</dbReference>
<dbReference type="InterPro" id="IPR002048">
    <property type="entry name" value="EF_hand_dom"/>
</dbReference>
<dbReference type="PANTHER" id="PTHR23048:SF0">
    <property type="entry name" value="CALMODULIN LIKE 3"/>
    <property type="match status" value="1"/>
</dbReference>
<dbReference type="PANTHER" id="PTHR23048">
    <property type="entry name" value="MYOSIN LIGHT CHAIN 1, 3"/>
    <property type="match status" value="1"/>
</dbReference>
<dbReference type="Pfam" id="PF13499">
    <property type="entry name" value="EF-hand_7"/>
    <property type="match status" value="1"/>
</dbReference>
<dbReference type="SMART" id="SM00054">
    <property type="entry name" value="EFh"/>
    <property type="match status" value="3"/>
</dbReference>
<dbReference type="SUPFAM" id="SSF47473">
    <property type="entry name" value="EF-hand"/>
    <property type="match status" value="1"/>
</dbReference>
<dbReference type="PROSITE" id="PS00018">
    <property type="entry name" value="EF_HAND_1"/>
    <property type="match status" value="1"/>
</dbReference>
<dbReference type="PROSITE" id="PS50222">
    <property type="entry name" value="EF_HAND_2"/>
    <property type="match status" value="4"/>
</dbReference>
<proteinExistence type="evidence at protein level"/>
<feature type="chain" id="PRO_0000073693" description="Troponin C">
    <location>
        <begin position="1"/>
        <end position="152"/>
    </location>
</feature>
<feature type="domain" description="EF-hand 1" evidence="1">
    <location>
        <begin position="9"/>
        <end position="44"/>
    </location>
</feature>
<feature type="domain" description="EF-hand 2" evidence="1">
    <location>
        <begin position="45"/>
        <end position="80"/>
    </location>
</feature>
<feature type="domain" description="EF-hand 3" evidence="1">
    <location>
        <begin position="82"/>
        <end position="117"/>
    </location>
</feature>
<feature type="domain" description="EF-hand 4" evidence="1">
    <location>
        <begin position="118"/>
        <end position="152"/>
    </location>
</feature>
<feature type="binding site" evidence="1">
    <location>
        <position position="131"/>
    </location>
    <ligand>
        <name>Ca(2+)</name>
        <dbReference type="ChEBI" id="CHEBI:29108"/>
    </ligand>
</feature>
<feature type="binding site" evidence="1">
    <location>
        <position position="133"/>
    </location>
    <ligand>
        <name>Ca(2+)</name>
        <dbReference type="ChEBI" id="CHEBI:29108"/>
    </ligand>
</feature>
<feature type="binding site" evidence="1">
    <location>
        <position position="135"/>
    </location>
    <ligand>
        <name>Ca(2+)</name>
        <dbReference type="ChEBI" id="CHEBI:29108"/>
    </ligand>
</feature>
<feature type="binding site" evidence="1">
    <location>
        <position position="137"/>
    </location>
    <ligand>
        <name>Ca(2+)</name>
        <dbReference type="ChEBI" id="CHEBI:29108"/>
    </ligand>
</feature>
<feature type="binding site" evidence="1">
    <location>
        <position position="142"/>
    </location>
    <ligand>
        <name>Ca(2+)</name>
        <dbReference type="ChEBI" id="CHEBI:29108"/>
    </ligand>
</feature>
<feature type="modified residue" description="N-acetylthreonine" evidence="2">
    <location>
        <position position="1"/>
    </location>
</feature>